<keyword id="KW-0963">Cytoplasm</keyword>
<keyword id="KW-0251">Elongation factor</keyword>
<keyword id="KW-0648">Protein biosynthesis</keyword>
<protein>
    <recommendedName>
        <fullName evidence="1">Elongation factor Ts</fullName>
        <shortName evidence="1">EF-Ts</shortName>
    </recommendedName>
</protein>
<feature type="chain" id="PRO_1000006094" description="Elongation factor Ts">
    <location>
        <begin position="1"/>
        <end position="289"/>
    </location>
</feature>
<feature type="region of interest" description="Involved in Mg(2+) ion dislocation from EF-Tu" evidence="1">
    <location>
        <begin position="80"/>
        <end position="83"/>
    </location>
</feature>
<accession>Q14JD1</accession>
<sequence>MSNISAKLVKELRERTGAGMMECKKALVAAAGDIEKAAEEMRISGQAKADKKASRVAAEGVIEVYAADGRAILLEINSETDFVARDETFKKFAQEAVKAAHAANAKTIEEVLAAKTSNGETVEEVRKSLIAKIGENIQVRRVKTVEAETLGAYIHGSKIGVVAALEGGDEDLAKDVAMHVAAANPMVVSGDQVPADVVAKEKEIFTAQAKESGKPAEIIEKMIVGRIRKFLDEVALLGQDFVKDPAIKVEKLVKDKGAKVVNFIRLDVGEGIEKKEEDFAAEVMSQIKG</sequence>
<organism>
    <name type="scientific">Francisella tularensis subsp. tularensis (strain FSC 198)</name>
    <dbReference type="NCBI Taxonomy" id="393115"/>
    <lineage>
        <taxon>Bacteria</taxon>
        <taxon>Pseudomonadati</taxon>
        <taxon>Pseudomonadota</taxon>
        <taxon>Gammaproteobacteria</taxon>
        <taxon>Thiotrichales</taxon>
        <taxon>Francisellaceae</taxon>
        <taxon>Francisella</taxon>
    </lineage>
</organism>
<proteinExistence type="inferred from homology"/>
<name>EFTS_FRAT1</name>
<dbReference type="EMBL" id="AM286280">
    <property type="protein sequence ID" value="CAL08330.1"/>
    <property type="molecule type" value="Genomic_DNA"/>
</dbReference>
<dbReference type="RefSeq" id="WP_003021614.1">
    <property type="nucleotide sequence ID" value="NC_008245.1"/>
</dbReference>
<dbReference type="SMR" id="Q14JD1"/>
<dbReference type="KEGG" id="ftf:FTF0314"/>
<dbReference type="HOGENOM" id="CLU_047155_0_2_6"/>
<dbReference type="GO" id="GO:0005737">
    <property type="term" value="C:cytoplasm"/>
    <property type="evidence" value="ECO:0007669"/>
    <property type="project" value="UniProtKB-SubCell"/>
</dbReference>
<dbReference type="GO" id="GO:0003746">
    <property type="term" value="F:translation elongation factor activity"/>
    <property type="evidence" value="ECO:0007669"/>
    <property type="project" value="UniProtKB-UniRule"/>
</dbReference>
<dbReference type="CDD" id="cd14275">
    <property type="entry name" value="UBA_EF-Ts"/>
    <property type="match status" value="1"/>
</dbReference>
<dbReference type="FunFam" id="1.10.286.20:FF:000001">
    <property type="entry name" value="Elongation factor Ts"/>
    <property type="match status" value="1"/>
</dbReference>
<dbReference type="FunFam" id="1.10.8.10:FF:000001">
    <property type="entry name" value="Elongation factor Ts"/>
    <property type="match status" value="1"/>
</dbReference>
<dbReference type="Gene3D" id="1.10.286.20">
    <property type="match status" value="1"/>
</dbReference>
<dbReference type="Gene3D" id="1.10.8.10">
    <property type="entry name" value="DNA helicase RuvA subunit, C-terminal domain"/>
    <property type="match status" value="1"/>
</dbReference>
<dbReference type="Gene3D" id="3.30.479.20">
    <property type="entry name" value="Elongation factor Ts, dimerisation domain"/>
    <property type="match status" value="2"/>
</dbReference>
<dbReference type="HAMAP" id="MF_00050">
    <property type="entry name" value="EF_Ts"/>
    <property type="match status" value="1"/>
</dbReference>
<dbReference type="InterPro" id="IPR036402">
    <property type="entry name" value="EF-Ts_dimer_sf"/>
</dbReference>
<dbReference type="InterPro" id="IPR001816">
    <property type="entry name" value="Transl_elong_EFTs/EF1B"/>
</dbReference>
<dbReference type="InterPro" id="IPR014039">
    <property type="entry name" value="Transl_elong_EFTs/EF1B_dimer"/>
</dbReference>
<dbReference type="InterPro" id="IPR018101">
    <property type="entry name" value="Transl_elong_Ts_CS"/>
</dbReference>
<dbReference type="InterPro" id="IPR009060">
    <property type="entry name" value="UBA-like_sf"/>
</dbReference>
<dbReference type="NCBIfam" id="TIGR00116">
    <property type="entry name" value="tsf"/>
    <property type="match status" value="1"/>
</dbReference>
<dbReference type="PANTHER" id="PTHR11741">
    <property type="entry name" value="ELONGATION FACTOR TS"/>
    <property type="match status" value="1"/>
</dbReference>
<dbReference type="PANTHER" id="PTHR11741:SF0">
    <property type="entry name" value="ELONGATION FACTOR TS, MITOCHONDRIAL"/>
    <property type="match status" value="1"/>
</dbReference>
<dbReference type="Pfam" id="PF00889">
    <property type="entry name" value="EF_TS"/>
    <property type="match status" value="1"/>
</dbReference>
<dbReference type="SUPFAM" id="SSF54713">
    <property type="entry name" value="Elongation factor Ts (EF-Ts), dimerisation domain"/>
    <property type="match status" value="2"/>
</dbReference>
<dbReference type="SUPFAM" id="SSF46934">
    <property type="entry name" value="UBA-like"/>
    <property type="match status" value="1"/>
</dbReference>
<dbReference type="PROSITE" id="PS01126">
    <property type="entry name" value="EF_TS_1"/>
    <property type="match status" value="1"/>
</dbReference>
<dbReference type="PROSITE" id="PS01127">
    <property type="entry name" value="EF_TS_2"/>
    <property type="match status" value="1"/>
</dbReference>
<gene>
    <name evidence="1" type="primary">tsf</name>
    <name type="ordered locus">FTF0314</name>
</gene>
<comment type="function">
    <text evidence="1">Associates with the EF-Tu.GDP complex and induces the exchange of GDP to GTP. It remains bound to the aminoacyl-tRNA.EF-Tu.GTP complex up to the GTP hydrolysis stage on the ribosome.</text>
</comment>
<comment type="subcellular location">
    <subcellularLocation>
        <location evidence="1">Cytoplasm</location>
    </subcellularLocation>
</comment>
<comment type="similarity">
    <text evidence="1">Belongs to the EF-Ts family.</text>
</comment>
<reference key="1">
    <citation type="journal article" date="2007" name="PLoS ONE">
        <title>Genome sequencing shows that European isolates of Francisella tularensis subspecies tularensis are almost identical to US laboratory strain Schu S4.</title>
        <authorList>
            <person name="Chaudhuri R.R."/>
            <person name="Ren C.-P."/>
            <person name="Desmond L."/>
            <person name="Vincent G.A."/>
            <person name="Silman N.J."/>
            <person name="Brehm J.K."/>
            <person name="Elmore M.J."/>
            <person name="Hudson M.J."/>
            <person name="Forsman M."/>
            <person name="Isherwood K.E."/>
            <person name="Gurycova D."/>
            <person name="Minton N.P."/>
            <person name="Titball R.W."/>
            <person name="Pallen M.J."/>
            <person name="Vipond R."/>
        </authorList>
    </citation>
    <scope>NUCLEOTIDE SEQUENCE [LARGE SCALE GENOMIC DNA]</scope>
    <source>
        <strain>FSC 198</strain>
    </source>
</reference>
<evidence type="ECO:0000255" key="1">
    <source>
        <dbReference type="HAMAP-Rule" id="MF_00050"/>
    </source>
</evidence>